<reference key="1">
    <citation type="submission" date="2009-01" db="EMBL/GenBank/DDBJ databases">
        <title>Complete sequence of chromosome of Methylobacterium nodulans ORS 2060.</title>
        <authorList>
            <consortium name="US DOE Joint Genome Institute"/>
            <person name="Lucas S."/>
            <person name="Copeland A."/>
            <person name="Lapidus A."/>
            <person name="Glavina del Rio T."/>
            <person name="Dalin E."/>
            <person name="Tice H."/>
            <person name="Bruce D."/>
            <person name="Goodwin L."/>
            <person name="Pitluck S."/>
            <person name="Sims D."/>
            <person name="Brettin T."/>
            <person name="Detter J.C."/>
            <person name="Han C."/>
            <person name="Larimer F."/>
            <person name="Land M."/>
            <person name="Hauser L."/>
            <person name="Kyrpides N."/>
            <person name="Ivanova N."/>
            <person name="Marx C.J."/>
            <person name="Richardson P."/>
        </authorList>
    </citation>
    <scope>NUCLEOTIDE SEQUENCE [LARGE SCALE GENOMIC DNA]</scope>
    <source>
        <strain>LMG 21967 / CNCM I-2342 / ORS 2060</strain>
    </source>
</reference>
<feature type="chain" id="PRO_1000165411" description="Small ribosomal subunit protein uS4">
    <location>
        <begin position="1"/>
        <end position="205"/>
    </location>
</feature>
<feature type="domain" description="S4 RNA-binding" evidence="1">
    <location>
        <begin position="94"/>
        <end position="156"/>
    </location>
</feature>
<feature type="region of interest" description="Disordered" evidence="2">
    <location>
        <begin position="1"/>
        <end position="49"/>
    </location>
</feature>
<feature type="compositionally biased region" description="Basic residues" evidence="2">
    <location>
        <begin position="1"/>
        <end position="12"/>
    </location>
</feature>
<evidence type="ECO:0000255" key="1">
    <source>
        <dbReference type="HAMAP-Rule" id="MF_01306"/>
    </source>
</evidence>
<evidence type="ECO:0000256" key="2">
    <source>
        <dbReference type="SAM" id="MobiDB-lite"/>
    </source>
</evidence>
<evidence type="ECO:0000305" key="3"/>
<proteinExistence type="inferred from homology"/>
<sequence>MSKRIQAKHKLDRRMGQNIWGRPKSPVNRREYGPGQHGQRRKGKLSDFGTQLRAKQKLKGYYANITEKQFRRYYAEAIRLRGDSGENLIGLLERRLDAVIYRAKFVATPFAARQFVNHGHIKVNGQRVNIPSFLVKPGDVIEVKESSKQLEIVVVASQLAERDVPDYIEVDHGKMTARFTRVPTLSEVPYPVHMEPNQVIEFYSR</sequence>
<protein>
    <recommendedName>
        <fullName evidence="1">Small ribosomal subunit protein uS4</fullName>
    </recommendedName>
    <alternativeName>
        <fullName evidence="3">30S ribosomal protein S4</fullName>
    </alternativeName>
</protein>
<keyword id="KW-1185">Reference proteome</keyword>
<keyword id="KW-0687">Ribonucleoprotein</keyword>
<keyword id="KW-0689">Ribosomal protein</keyword>
<keyword id="KW-0694">RNA-binding</keyword>
<keyword id="KW-0699">rRNA-binding</keyword>
<gene>
    <name evidence="1" type="primary">rpsD</name>
    <name type="ordered locus">Mnod_0359</name>
</gene>
<comment type="function">
    <text evidence="1">One of the primary rRNA binding proteins, it binds directly to 16S rRNA where it nucleates assembly of the body of the 30S subunit.</text>
</comment>
<comment type="function">
    <text evidence="1">With S5 and S12 plays an important role in translational accuracy.</text>
</comment>
<comment type="subunit">
    <text evidence="1">Part of the 30S ribosomal subunit. Contacts protein S5. The interaction surface between S4 and S5 is involved in control of translational fidelity.</text>
</comment>
<comment type="similarity">
    <text evidence="1">Belongs to the universal ribosomal protein uS4 family.</text>
</comment>
<name>RS4_METNO</name>
<dbReference type="EMBL" id="CP001349">
    <property type="protein sequence ID" value="ACL55402.1"/>
    <property type="molecule type" value="Genomic_DNA"/>
</dbReference>
<dbReference type="RefSeq" id="WP_015927113.1">
    <property type="nucleotide sequence ID" value="NC_011894.1"/>
</dbReference>
<dbReference type="SMR" id="B8IB09"/>
<dbReference type="STRING" id="460265.Mnod_0359"/>
<dbReference type="KEGG" id="mno:Mnod_0359"/>
<dbReference type="eggNOG" id="COG0522">
    <property type="taxonomic scope" value="Bacteria"/>
</dbReference>
<dbReference type="HOGENOM" id="CLU_092403_0_0_5"/>
<dbReference type="OrthoDB" id="9803672at2"/>
<dbReference type="Proteomes" id="UP000008207">
    <property type="component" value="Chromosome"/>
</dbReference>
<dbReference type="GO" id="GO:0015935">
    <property type="term" value="C:small ribosomal subunit"/>
    <property type="evidence" value="ECO:0007669"/>
    <property type="project" value="InterPro"/>
</dbReference>
<dbReference type="GO" id="GO:0019843">
    <property type="term" value="F:rRNA binding"/>
    <property type="evidence" value="ECO:0007669"/>
    <property type="project" value="UniProtKB-UniRule"/>
</dbReference>
<dbReference type="GO" id="GO:0003735">
    <property type="term" value="F:structural constituent of ribosome"/>
    <property type="evidence" value="ECO:0007669"/>
    <property type="project" value="InterPro"/>
</dbReference>
<dbReference type="GO" id="GO:0042274">
    <property type="term" value="P:ribosomal small subunit biogenesis"/>
    <property type="evidence" value="ECO:0007669"/>
    <property type="project" value="TreeGrafter"/>
</dbReference>
<dbReference type="GO" id="GO:0006412">
    <property type="term" value="P:translation"/>
    <property type="evidence" value="ECO:0007669"/>
    <property type="project" value="UniProtKB-UniRule"/>
</dbReference>
<dbReference type="CDD" id="cd00165">
    <property type="entry name" value="S4"/>
    <property type="match status" value="1"/>
</dbReference>
<dbReference type="FunFam" id="3.10.290.10:FF:000001">
    <property type="entry name" value="30S ribosomal protein S4"/>
    <property type="match status" value="1"/>
</dbReference>
<dbReference type="Gene3D" id="1.10.1050.10">
    <property type="entry name" value="Ribosomal Protein S4 Delta 41, Chain A, domain 1"/>
    <property type="match status" value="1"/>
</dbReference>
<dbReference type="Gene3D" id="3.10.290.10">
    <property type="entry name" value="RNA-binding S4 domain"/>
    <property type="match status" value="1"/>
</dbReference>
<dbReference type="HAMAP" id="MF_01306_B">
    <property type="entry name" value="Ribosomal_uS4_B"/>
    <property type="match status" value="1"/>
</dbReference>
<dbReference type="InterPro" id="IPR022801">
    <property type="entry name" value="Ribosomal_uS4"/>
</dbReference>
<dbReference type="InterPro" id="IPR005709">
    <property type="entry name" value="Ribosomal_uS4_bac-type"/>
</dbReference>
<dbReference type="InterPro" id="IPR018079">
    <property type="entry name" value="Ribosomal_uS4_CS"/>
</dbReference>
<dbReference type="InterPro" id="IPR001912">
    <property type="entry name" value="Ribosomal_uS4_N"/>
</dbReference>
<dbReference type="InterPro" id="IPR002942">
    <property type="entry name" value="S4_RNA-bd"/>
</dbReference>
<dbReference type="InterPro" id="IPR036986">
    <property type="entry name" value="S4_RNA-bd_sf"/>
</dbReference>
<dbReference type="NCBIfam" id="NF003717">
    <property type="entry name" value="PRK05327.1"/>
    <property type="match status" value="1"/>
</dbReference>
<dbReference type="NCBIfam" id="TIGR01017">
    <property type="entry name" value="rpsD_bact"/>
    <property type="match status" value="1"/>
</dbReference>
<dbReference type="PANTHER" id="PTHR11831">
    <property type="entry name" value="30S 40S RIBOSOMAL PROTEIN"/>
    <property type="match status" value="1"/>
</dbReference>
<dbReference type="PANTHER" id="PTHR11831:SF4">
    <property type="entry name" value="SMALL RIBOSOMAL SUBUNIT PROTEIN US4M"/>
    <property type="match status" value="1"/>
</dbReference>
<dbReference type="Pfam" id="PF00163">
    <property type="entry name" value="Ribosomal_S4"/>
    <property type="match status" value="1"/>
</dbReference>
<dbReference type="Pfam" id="PF01479">
    <property type="entry name" value="S4"/>
    <property type="match status" value="1"/>
</dbReference>
<dbReference type="SMART" id="SM01390">
    <property type="entry name" value="Ribosomal_S4"/>
    <property type="match status" value="1"/>
</dbReference>
<dbReference type="SMART" id="SM00363">
    <property type="entry name" value="S4"/>
    <property type="match status" value="1"/>
</dbReference>
<dbReference type="SUPFAM" id="SSF55174">
    <property type="entry name" value="Alpha-L RNA-binding motif"/>
    <property type="match status" value="1"/>
</dbReference>
<dbReference type="PROSITE" id="PS00632">
    <property type="entry name" value="RIBOSOMAL_S4"/>
    <property type="match status" value="1"/>
</dbReference>
<dbReference type="PROSITE" id="PS50889">
    <property type="entry name" value="S4"/>
    <property type="match status" value="1"/>
</dbReference>
<accession>B8IB09</accession>
<organism>
    <name type="scientific">Methylobacterium nodulans (strain LMG 21967 / CNCM I-2342 / ORS 2060)</name>
    <dbReference type="NCBI Taxonomy" id="460265"/>
    <lineage>
        <taxon>Bacteria</taxon>
        <taxon>Pseudomonadati</taxon>
        <taxon>Pseudomonadota</taxon>
        <taxon>Alphaproteobacteria</taxon>
        <taxon>Hyphomicrobiales</taxon>
        <taxon>Methylobacteriaceae</taxon>
        <taxon>Methylobacterium</taxon>
    </lineage>
</organism>